<name>PYRR_SYNY3</name>
<sequence>MAAQIIEILSPEEIRRTLTRLASQVIEKNSDLSELVLLGIYTRGVPLAHQLAQQIEMLEQVKVPVGAIDVTLYRDDLKRIKTRTPAKTKIPLSLTGKRVVLVDDVIYKGRTIRAALNAVTEYGRPQVIRLLTLVDRGHRELPIHPDFVGKILPTAAEEQVKVYLQDPDGRDTVELIKG</sequence>
<protein>
    <recommendedName>
        <fullName evidence="2">Bifunctional protein PyrR</fullName>
    </recommendedName>
    <domain>
        <recommendedName>
            <fullName evidence="2">Pyrimidine operon regulatory protein</fullName>
        </recommendedName>
    </domain>
    <domain>
        <recommendedName>
            <fullName evidence="2">Uracil phosphoribosyltransferase</fullName>
            <shortName evidence="2">UPRTase</shortName>
            <ecNumber evidence="2">2.4.2.9</ecNumber>
        </recommendedName>
    </domain>
</protein>
<keyword id="KW-0328">Glycosyltransferase</keyword>
<keyword id="KW-1185">Reference proteome</keyword>
<keyword id="KW-0804">Transcription</keyword>
<keyword id="KW-0805">Transcription regulation</keyword>
<keyword id="KW-0808">Transferase</keyword>
<evidence type="ECO:0000250" key="1"/>
<evidence type="ECO:0000255" key="2">
    <source>
        <dbReference type="HAMAP-Rule" id="MF_01219"/>
    </source>
</evidence>
<dbReference type="EC" id="2.4.2.9" evidence="2"/>
<dbReference type="EMBL" id="BA000022">
    <property type="protein sequence ID" value="BAA10405.1"/>
    <property type="molecule type" value="Genomic_DNA"/>
</dbReference>
<dbReference type="PIR" id="S76559">
    <property type="entry name" value="S76559"/>
</dbReference>
<dbReference type="SMR" id="Q55758"/>
<dbReference type="FunCoup" id="Q55758">
    <property type="interactions" value="176"/>
</dbReference>
<dbReference type="STRING" id="1148.gene:10499906"/>
<dbReference type="PaxDb" id="1148-1001670"/>
<dbReference type="EnsemblBacteria" id="BAA10405">
    <property type="protein sequence ID" value="BAA10405"/>
    <property type="gene ID" value="BAA10405"/>
</dbReference>
<dbReference type="KEGG" id="syn:sll0368"/>
<dbReference type="eggNOG" id="COG2065">
    <property type="taxonomic scope" value="Bacteria"/>
</dbReference>
<dbReference type="InParanoid" id="Q55758"/>
<dbReference type="PhylomeDB" id="Q55758"/>
<dbReference type="Proteomes" id="UP000001425">
    <property type="component" value="Chromosome"/>
</dbReference>
<dbReference type="GO" id="GO:0004845">
    <property type="term" value="F:uracil phosphoribosyltransferase activity"/>
    <property type="evidence" value="ECO:0007669"/>
    <property type="project" value="UniProtKB-UniRule"/>
</dbReference>
<dbReference type="GO" id="GO:0006355">
    <property type="term" value="P:regulation of DNA-templated transcription"/>
    <property type="evidence" value="ECO:0007669"/>
    <property type="project" value="UniProtKB-UniRule"/>
</dbReference>
<dbReference type="CDD" id="cd06223">
    <property type="entry name" value="PRTases_typeI"/>
    <property type="match status" value="1"/>
</dbReference>
<dbReference type="FunFam" id="3.40.50.2020:FF:000020">
    <property type="entry name" value="Bifunctional protein PyrR"/>
    <property type="match status" value="1"/>
</dbReference>
<dbReference type="Gene3D" id="3.40.50.2020">
    <property type="match status" value="1"/>
</dbReference>
<dbReference type="HAMAP" id="MF_01219">
    <property type="entry name" value="PyrR"/>
    <property type="match status" value="1"/>
</dbReference>
<dbReference type="InterPro" id="IPR000836">
    <property type="entry name" value="PRibTrfase_dom"/>
</dbReference>
<dbReference type="InterPro" id="IPR029057">
    <property type="entry name" value="PRTase-like"/>
</dbReference>
<dbReference type="InterPro" id="IPR023050">
    <property type="entry name" value="PyrR"/>
</dbReference>
<dbReference type="InterPro" id="IPR050137">
    <property type="entry name" value="PyrR_bifunctional"/>
</dbReference>
<dbReference type="NCBIfam" id="NF003549">
    <property type="entry name" value="PRK05205.1-5"/>
    <property type="match status" value="1"/>
</dbReference>
<dbReference type="PANTHER" id="PTHR11608">
    <property type="entry name" value="BIFUNCTIONAL PROTEIN PYRR"/>
    <property type="match status" value="1"/>
</dbReference>
<dbReference type="PANTHER" id="PTHR11608:SF0">
    <property type="entry name" value="BIFUNCTIONAL PROTEIN PYRR"/>
    <property type="match status" value="1"/>
</dbReference>
<dbReference type="Pfam" id="PF00156">
    <property type="entry name" value="Pribosyltran"/>
    <property type="match status" value="1"/>
</dbReference>
<dbReference type="SUPFAM" id="SSF53271">
    <property type="entry name" value="PRTase-like"/>
    <property type="match status" value="1"/>
</dbReference>
<comment type="function">
    <text evidence="2">Regulates the transcription of the pyrimidine nucleotide (pyr) operon in response to exogenous pyrimidines.</text>
</comment>
<comment type="function">
    <text evidence="2">Also displays a weak uracil phosphoribosyltransferase activity which is not physiologically significant.</text>
</comment>
<comment type="catalytic activity">
    <reaction evidence="2">
        <text>UMP + diphosphate = 5-phospho-alpha-D-ribose 1-diphosphate + uracil</text>
        <dbReference type="Rhea" id="RHEA:13017"/>
        <dbReference type="ChEBI" id="CHEBI:17568"/>
        <dbReference type="ChEBI" id="CHEBI:33019"/>
        <dbReference type="ChEBI" id="CHEBI:57865"/>
        <dbReference type="ChEBI" id="CHEBI:58017"/>
        <dbReference type="EC" id="2.4.2.9"/>
    </reaction>
</comment>
<comment type="similarity">
    <text evidence="2">Belongs to the purine/pyrimidine phosphoribosyltransferase family. PyrR subfamily.</text>
</comment>
<gene>
    <name evidence="2" type="primary">pyrR</name>
    <name type="ordered locus">sll0368</name>
</gene>
<feature type="chain" id="PRO_0000183071" description="Bifunctional protein PyrR">
    <location>
        <begin position="1"/>
        <end position="178"/>
    </location>
</feature>
<feature type="short sequence motif" description="PRPP-binding" evidence="2">
    <location>
        <begin position="99"/>
        <end position="111"/>
    </location>
</feature>
<feature type="binding site" description="in other chain" evidence="1">
    <location>
        <begin position="42"/>
        <end position="43"/>
    </location>
    <ligand>
        <name>substrate</name>
        <note>ligand shared between dimeric partners</note>
    </ligand>
</feature>
<feature type="binding site" evidence="1">
    <location>
        <position position="83"/>
    </location>
    <ligand>
        <name>substrate</name>
        <note>ligand shared between dimeric partners</note>
    </ligand>
</feature>
<feature type="binding site" description="in other chain" evidence="1">
    <location>
        <begin position="103"/>
        <end position="111"/>
    </location>
    <ligand>
        <name>substrate</name>
        <note>ligand shared between dimeric partners</note>
    </ligand>
</feature>
<feature type="binding site" description="in other chain" evidence="1">
    <location>
        <position position="136"/>
    </location>
    <ligand>
        <name>substrate</name>
        <note>ligand shared between dimeric partners</note>
    </ligand>
</feature>
<feature type="binding site" description="in other chain" evidence="1">
    <location>
        <position position="160"/>
    </location>
    <ligand>
        <name>substrate</name>
        <note>ligand shared between dimeric partners</note>
    </ligand>
</feature>
<organism>
    <name type="scientific">Synechocystis sp. (strain ATCC 27184 / PCC 6803 / Kazusa)</name>
    <dbReference type="NCBI Taxonomy" id="1111708"/>
    <lineage>
        <taxon>Bacteria</taxon>
        <taxon>Bacillati</taxon>
        <taxon>Cyanobacteriota</taxon>
        <taxon>Cyanophyceae</taxon>
        <taxon>Synechococcales</taxon>
        <taxon>Merismopediaceae</taxon>
        <taxon>Synechocystis</taxon>
    </lineage>
</organism>
<proteinExistence type="inferred from homology"/>
<reference key="1">
    <citation type="journal article" date="1995" name="DNA Res.">
        <title>Sequence analysis of the genome of the unicellular cyanobacterium Synechocystis sp. strain PCC6803. I. Sequence features in the 1 Mb region from map positions 64% to 92% of the genome.</title>
        <authorList>
            <person name="Kaneko T."/>
            <person name="Tanaka A."/>
            <person name="Sato S."/>
            <person name="Kotani H."/>
            <person name="Sazuka T."/>
            <person name="Miyajima N."/>
            <person name="Sugiura M."/>
            <person name="Tabata S."/>
        </authorList>
    </citation>
    <scope>NUCLEOTIDE SEQUENCE [LARGE SCALE GENOMIC DNA]</scope>
    <source>
        <strain>ATCC 27184 / PCC 6803 / N-1</strain>
    </source>
</reference>
<reference key="2">
    <citation type="journal article" date="1996" name="DNA Res.">
        <title>Sequence analysis of the genome of the unicellular cyanobacterium Synechocystis sp. strain PCC6803. II. Sequence determination of the entire genome and assignment of potential protein-coding regions.</title>
        <authorList>
            <person name="Kaneko T."/>
            <person name="Sato S."/>
            <person name="Kotani H."/>
            <person name="Tanaka A."/>
            <person name="Asamizu E."/>
            <person name="Nakamura Y."/>
            <person name="Miyajima N."/>
            <person name="Hirosawa M."/>
            <person name="Sugiura M."/>
            <person name="Sasamoto S."/>
            <person name="Kimura T."/>
            <person name="Hosouchi T."/>
            <person name="Matsuno A."/>
            <person name="Muraki A."/>
            <person name="Nakazaki N."/>
            <person name="Naruo K."/>
            <person name="Okumura S."/>
            <person name="Shimpo S."/>
            <person name="Takeuchi C."/>
            <person name="Wada T."/>
            <person name="Watanabe A."/>
            <person name="Yamada M."/>
            <person name="Yasuda M."/>
            <person name="Tabata S."/>
        </authorList>
    </citation>
    <scope>NUCLEOTIDE SEQUENCE [LARGE SCALE GENOMIC DNA]</scope>
    <source>
        <strain>ATCC 27184 / PCC 6803 / Kazusa</strain>
    </source>
</reference>
<accession>Q55758</accession>